<reference key="1">
    <citation type="journal article" date="2002" name="Nucleic Acids Res.">
        <title>Genome sequence of Shigella flexneri 2a: insights into pathogenicity through comparison with genomes of Escherichia coli K12 and O157.</title>
        <authorList>
            <person name="Jin Q."/>
            <person name="Yuan Z."/>
            <person name="Xu J."/>
            <person name="Wang Y."/>
            <person name="Shen Y."/>
            <person name="Lu W."/>
            <person name="Wang J."/>
            <person name="Liu H."/>
            <person name="Yang J."/>
            <person name="Yang F."/>
            <person name="Zhang X."/>
            <person name="Zhang J."/>
            <person name="Yang G."/>
            <person name="Wu H."/>
            <person name="Qu D."/>
            <person name="Dong J."/>
            <person name="Sun L."/>
            <person name="Xue Y."/>
            <person name="Zhao A."/>
            <person name="Gao Y."/>
            <person name="Zhu J."/>
            <person name="Kan B."/>
            <person name="Ding K."/>
            <person name="Chen S."/>
            <person name="Cheng H."/>
            <person name="Yao Z."/>
            <person name="He B."/>
            <person name="Chen R."/>
            <person name="Ma D."/>
            <person name="Qiang B."/>
            <person name="Wen Y."/>
            <person name="Hou Y."/>
            <person name="Yu J."/>
        </authorList>
    </citation>
    <scope>NUCLEOTIDE SEQUENCE [LARGE SCALE GENOMIC DNA]</scope>
    <source>
        <strain>301 / Serotype 2a</strain>
    </source>
</reference>
<reference key="2">
    <citation type="journal article" date="2003" name="Infect. Immun.">
        <title>Complete genome sequence and comparative genomics of Shigella flexneri serotype 2a strain 2457T.</title>
        <authorList>
            <person name="Wei J."/>
            <person name="Goldberg M.B."/>
            <person name="Burland V."/>
            <person name="Venkatesan M.M."/>
            <person name="Deng W."/>
            <person name="Fournier G."/>
            <person name="Mayhew G.F."/>
            <person name="Plunkett G. III"/>
            <person name="Rose D.J."/>
            <person name="Darling A."/>
            <person name="Mau B."/>
            <person name="Perna N.T."/>
            <person name="Payne S.M."/>
            <person name="Runyen-Janecky L.J."/>
            <person name="Zhou S."/>
            <person name="Schwartz D.C."/>
            <person name="Blattner F.R."/>
        </authorList>
    </citation>
    <scope>NUCLEOTIDE SEQUENCE [LARGE SCALE GENOMIC DNA]</scope>
    <source>
        <strain>ATCC 700930 / 2457T / Serotype 2a</strain>
    </source>
</reference>
<sequence length="391" mass="41554">MSRFLICSFALVLLYPAGIDMYLVGLPRIAADLNASEAQLHIAFSVYLAGMAAAMLFAGKVADRSGRKPVAIPGAALFIIASVFCSLAETSTLFLAGRFLQGLGAGCCYVVAFAILRDTLDDRRRAKVLSLLNGITCIIPVLAPVLGHLIMLKFPWQSLFWAMAMMGIAVLMLSLFILKETRPASPAASDKPRENSESLLNRFFLSRVVITTLSVSVILTFVNTSPVLLMEIMGFERGEYATIMALTAGVSMTFSFSTPFALGIFKPRTLMITSQVLFLAAGITLAVSPSHAVSLFGITLICAGFSVGFGVAMSQALGPFSLRAGVASSTLGIAQVCGSSLWIWLAAVVGIGAWNMLIGILIACSIVSLLLIMFVAPGRPVAAHEEIHHHA</sequence>
<proteinExistence type="inferred from homology"/>
<protein>
    <recommendedName>
        <fullName>Multidrug resistance protein MdtL</fullName>
    </recommendedName>
</protein>
<feature type="chain" id="PRO_0000173362" description="Multidrug resistance protein MdtL">
    <location>
        <begin position="1"/>
        <end position="391"/>
    </location>
</feature>
<feature type="topological domain" description="Cytoplasmic" evidence="2">
    <location>
        <begin position="1"/>
        <end position="3"/>
    </location>
</feature>
<feature type="transmembrane region" description="Helical" evidence="2">
    <location>
        <begin position="4"/>
        <end position="24"/>
    </location>
</feature>
<feature type="topological domain" description="Periplasmic" evidence="2">
    <location>
        <begin position="25"/>
        <end position="41"/>
    </location>
</feature>
<feature type="transmembrane region" description="Helical" evidence="2">
    <location>
        <begin position="42"/>
        <end position="62"/>
    </location>
</feature>
<feature type="topological domain" description="Cytoplasmic" evidence="2">
    <location>
        <begin position="63"/>
        <end position="68"/>
    </location>
</feature>
<feature type="transmembrane region" description="Helical" evidence="2">
    <location>
        <begin position="69"/>
        <end position="89"/>
    </location>
</feature>
<feature type="topological domain" description="Periplasmic" evidence="2">
    <location>
        <begin position="90"/>
        <end position="92"/>
    </location>
</feature>
<feature type="transmembrane region" description="Helical" evidence="2">
    <location>
        <begin position="93"/>
        <end position="113"/>
    </location>
</feature>
<feature type="topological domain" description="Cytoplasmic" evidence="2">
    <location>
        <begin position="114"/>
        <end position="130"/>
    </location>
</feature>
<feature type="transmembrane region" description="Helical" evidence="2">
    <location>
        <begin position="131"/>
        <end position="151"/>
    </location>
</feature>
<feature type="topological domain" description="Periplasmic" evidence="2">
    <location>
        <begin position="152"/>
        <end position="157"/>
    </location>
</feature>
<feature type="transmembrane region" description="Helical" evidence="2">
    <location>
        <begin position="158"/>
        <end position="178"/>
    </location>
</feature>
<feature type="topological domain" description="Cytoplasmic" evidence="2">
    <location>
        <begin position="179"/>
        <end position="202"/>
    </location>
</feature>
<feature type="transmembrane region" description="Helical" evidence="2">
    <location>
        <begin position="203"/>
        <end position="222"/>
    </location>
</feature>
<feature type="topological domain" description="Periplasmic" evidence="2">
    <location>
        <begin position="223"/>
        <end position="244"/>
    </location>
</feature>
<feature type="transmembrane region" description="Helical" evidence="2">
    <location>
        <begin position="245"/>
        <end position="265"/>
    </location>
</feature>
<feature type="topological domain" description="Cytoplasmic" evidence="2">
    <location>
        <begin position="266"/>
        <end position="268"/>
    </location>
</feature>
<feature type="transmembrane region" description="Helical" evidence="2">
    <location>
        <begin position="269"/>
        <end position="289"/>
    </location>
</feature>
<feature type="topological domain" description="Periplasmic" evidence="2">
    <location>
        <begin position="290"/>
        <end position="292"/>
    </location>
</feature>
<feature type="transmembrane region" description="Helical" evidence="2">
    <location>
        <begin position="293"/>
        <end position="313"/>
    </location>
</feature>
<feature type="topological domain" description="Cytoplasmic" evidence="2">
    <location>
        <begin position="314"/>
        <end position="330"/>
    </location>
</feature>
<feature type="transmembrane region" description="Helical" evidence="2">
    <location>
        <begin position="331"/>
        <end position="351"/>
    </location>
</feature>
<feature type="topological domain" description="Periplasmic" evidence="2">
    <location>
        <begin position="352"/>
        <end position="355"/>
    </location>
</feature>
<feature type="transmembrane region" description="Helical" evidence="2">
    <location>
        <begin position="356"/>
        <end position="376"/>
    </location>
</feature>
<feature type="topological domain" description="Cytoplasmic" evidence="2">
    <location>
        <begin position="377"/>
        <end position="391"/>
    </location>
</feature>
<evidence type="ECO:0000250" key="1"/>
<evidence type="ECO:0000255" key="2"/>
<evidence type="ECO:0000305" key="3"/>
<comment type="subcellular location">
    <subcellularLocation>
        <location evidence="1">Cell inner membrane</location>
        <topology evidence="1">Multi-pass membrane protein</topology>
    </subcellularLocation>
</comment>
<comment type="similarity">
    <text evidence="3">Belongs to the major facilitator superfamily. DHA1 family. MdtL (TC 2.A.1.2.22) subfamily.</text>
</comment>
<organism>
    <name type="scientific">Shigella flexneri</name>
    <dbReference type="NCBI Taxonomy" id="623"/>
    <lineage>
        <taxon>Bacteria</taxon>
        <taxon>Pseudomonadati</taxon>
        <taxon>Pseudomonadota</taxon>
        <taxon>Gammaproteobacteria</taxon>
        <taxon>Enterobacterales</taxon>
        <taxon>Enterobacteriaceae</taxon>
        <taxon>Shigella</taxon>
    </lineage>
</organism>
<accession>Q83PL6</accession>
<accession>Q7BZ75</accession>
<keyword id="KW-0997">Cell inner membrane</keyword>
<keyword id="KW-1003">Cell membrane</keyword>
<keyword id="KW-0472">Membrane</keyword>
<keyword id="KW-1185">Reference proteome</keyword>
<keyword id="KW-0812">Transmembrane</keyword>
<keyword id="KW-1133">Transmembrane helix</keyword>
<keyword id="KW-0813">Transport</keyword>
<name>MDTL_SHIFL</name>
<gene>
    <name type="primary">mdtL</name>
    <name type="ordered locus">SF3752</name>
    <name type="ordered locus">S4019</name>
</gene>
<dbReference type="EMBL" id="AE005674">
    <property type="protein sequence ID" value="AAN45195.1"/>
    <property type="molecule type" value="Genomic_DNA"/>
</dbReference>
<dbReference type="EMBL" id="AE014073">
    <property type="protein sequence ID" value="AAP19002.1"/>
    <property type="molecule type" value="Genomic_DNA"/>
</dbReference>
<dbReference type="RefSeq" id="WP_000085985.1">
    <property type="nucleotide sequence ID" value="NZ_WPGW01000194.1"/>
</dbReference>
<dbReference type="SMR" id="Q83PL6"/>
<dbReference type="STRING" id="198214.SF3752"/>
<dbReference type="PaxDb" id="198214-SF3752"/>
<dbReference type="KEGG" id="sfl:SF3752"/>
<dbReference type="KEGG" id="sfx:S4019"/>
<dbReference type="PATRIC" id="fig|198214.7.peg.4429"/>
<dbReference type="HOGENOM" id="CLU_001265_47_1_6"/>
<dbReference type="Proteomes" id="UP000001006">
    <property type="component" value="Chromosome"/>
</dbReference>
<dbReference type="Proteomes" id="UP000002673">
    <property type="component" value="Chromosome"/>
</dbReference>
<dbReference type="GO" id="GO:0005886">
    <property type="term" value="C:plasma membrane"/>
    <property type="evidence" value="ECO:0007669"/>
    <property type="project" value="UniProtKB-SubCell"/>
</dbReference>
<dbReference type="GO" id="GO:0022857">
    <property type="term" value="F:transmembrane transporter activity"/>
    <property type="evidence" value="ECO:0007669"/>
    <property type="project" value="UniProtKB-UniRule"/>
</dbReference>
<dbReference type="CDD" id="cd17320">
    <property type="entry name" value="MFS_MdfA_MDR_like"/>
    <property type="match status" value="1"/>
</dbReference>
<dbReference type="FunFam" id="1.20.1720.10:FF:000003">
    <property type="entry name" value="Multidrug resistance protein MdtL"/>
    <property type="match status" value="1"/>
</dbReference>
<dbReference type="Gene3D" id="1.20.1720.10">
    <property type="entry name" value="Multidrug resistance protein D"/>
    <property type="match status" value="1"/>
</dbReference>
<dbReference type="HAMAP" id="MF_01530">
    <property type="entry name" value="MFS_MdtL"/>
    <property type="match status" value="1"/>
</dbReference>
<dbReference type="InterPro" id="IPR011701">
    <property type="entry name" value="MFS"/>
</dbReference>
<dbReference type="InterPro" id="IPR020846">
    <property type="entry name" value="MFS_dom"/>
</dbReference>
<dbReference type="InterPro" id="IPR050189">
    <property type="entry name" value="MFS_Efflux_Transporters"/>
</dbReference>
<dbReference type="InterPro" id="IPR036259">
    <property type="entry name" value="MFS_trans_sf"/>
</dbReference>
<dbReference type="InterPro" id="IPR023697">
    <property type="entry name" value="Multidrug-R_MdtL"/>
</dbReference>
<dbReference type="NCBIfam" id="NF007782">
    <property type="entry name" value="PRK10473.1"/>
    <property type="match status" value="1"/>
</dbReference>
<dbReference type="PANTHER" id="PTHR43124:SF3">
    <property type="entry name" value="CHLORAMPHENICOL EFFLUX PUMP RV0191"/>
    <property type="match status" value="1"/>
</dbReference>
<dbReference type="PANTHER" id="PTHR43124">
    <property type="entry name" value="PURINE EFFLUX PUMP PBUE"/>
    <property type="match status" value="1"/>
</dbReference>
<dbReference type="Pfam" id="PF07690">
    <property type="entry name" value="MFS_1"/>
    <property type="match status" value="1"/>
</dbReference>
<dbReference type="SUPFAM" id="SSF103473">
    <property type="entry name" value="MFS general substrate transporter"/>
    <property type="match status" value="1"/>
</dbReference>
<dbReference type="PROSITE" id="PS50850">
    <property type="entry name" value="MFS"/>
    <property type="match status" value="1"/>
</dbReference>